<dbReference type="EC" id="3.1.1.-"/>
<dbReference type="EMBL" id="AABR03082299">
    <property type="status" value="NOT_ANNOTATED_CDS"/>
    <property type="molecule type" value="Genomic_DNA"/>
</dbReference>
<dbReference type="EMBL" id="BC086408">
    <property type="protein sequence ID" value="AAH86408.1"/>
    <property type="molecule type" value="mRNA"/>
</dbReference>
<dbReference type="EMBL" id="BC097934">
    <property type="protein sequence ID" value="AAH97934.1"/>
    <property type="molecule type" value="mRNA"/>
</dbReference>
<dbReference type="EMBL" id="BC104715">
    <property type="protein sequence ID" value="AAI04716.1"/>
    <property type="molecule type" value="mRNA"/>
</dbReference>
<dbReference type="EMBL" id="BC126078">
    <property type="protein sequence ID" value="AAI26079.1"/>
    <property type="molecule type" value="mRNA"/>
</dbReference>
<dbReference type="EMBL" id="AY095481">
    <property type="protein sequence ID" value="AAM23313.1"/>
    <property type="status" value="ALT_INIT"/>
    <property type="molecule type" value="mRNA"/>
</dbReference>
<dbReference type="RefSeq" id="NP_640348.2">
    <property type="nucleotide sequence ID" value="NM_139255.3"/>
</dbReference>
<dbReference type="SMR" id="Q4QQW8"/>
<dbReference type="FunCoup" id="Q4QQW8">
    <property type="interactions" value="1299"/>
</dbReference>
<dbReference type="IntAct" id="Q4QQW8">
    <property type="interactions" value="1"/>
</dbReference>
<dbReference type="STRING" id="10116.ENSRNOP00000001872"/>
<dbReference type="MEROPS" id="C95.001"/>
<dbReference type="GlyCosmos" id="Q4QQW8">
    <property type="glycosylation" value="6 sites, No reported glycans"/>
</dbReference>
<dbReference type="GlyGen" id="Q4QQW8">
    <property type="glycosylation" value="7 sites"/>
</dbReference>
<dbReference type="PhosphoSitePlus" id="Q4QQW8"/>
<dbReference type="jPOST" id="Q4QQW8"/>
<dbReference type="PaxDb" id="10116-ENSRNOP00000001872"/>
<dbReference type="GeneID" id="246120"/>
<dbReference type="KEGG" id="rno:246120"/>
<dbReference type="UCSC" id="RGD:708461">
    <property type="organism name" value="rat"/>
</dbReference>
<dbReference type="AGR" id="RGD:708461"/>
<dbReference type="CTD" id="196463"/>
<dbReference type="RGD" id="708461">
    <property type="gene designation" value="Plbd2"/>
</dbReference>
<dbReference type="VEuPathDB" id="HostDB:ENSRNOG00000001385"/>
<dbReference type="eggNOG" id="KOG3774">
    <property type="taxonomic scope" value="Eukaryota"/>
</dbReference>
<dbReference type="HOGENOM" id="CLU_027106_4_0_1"/>
<dbReference type="InParanoid" id="Q4QQW8"/>
<dbReference type="OrthoDB" id="24745at9989"/>
<dbReference type="PhylomeDB" id="Q4QQW8"/>
<dbReference type="TreeFam" id="TF315042"/>
<dbReference type="PRO" id="PR:Q4QQW8"/>
<dbReference type="Proteomes" id="UP000002494">
    <property type="component" value="Chromosome 12"/>
</dbReference>
<dbReference type="Bgee" id="ENSRNOG00000001385">
    <property type="expression patterns" value="Expressed in liver and 19 other cell types or tissues"/>
</dbReference>
<dbReference type="GO" id="GO:0005576">
    <property type="term" value="C:extracellular region"/>
    <property type="evidence" value="ECO:0000318"/>
    <property type="project" value="GO_Central"/>
</dbReference>
<dbReference type="GO" id="GO:0043202">
    <property type="term" value="C:lysosomal lumen"/>
    <property type="evidence" value="ECO:0007669"/>
    <property type="project" value="UniProtKB-SubCell"/>
</dbReference>
<dbReference type="GO" id="GO:0005764">
    <property type="term" value="C:lysosome"/>
    <property type="evidence" value="ECO:0000266"/>
    <property type="project" value="RGD"/>
</dbReference>
<dbReference type="GO" id="GO:0004620">
    <property type="term" value="F:phospholipase activity"/>
    <property type="evidence" value="ECO:0000318"/>
    <property type="project" value="GO_Central"/>
</dbReference>
<dbReference type="GO" id="GO:0009395">
    <property type="term" value="P:phospholipid catabolic process"/>
    <property type="evidence" value="ECO:0000318"/>
    <property type="project" value="GO_Central"/>
</dbReference>
<dbReference type="Gene3D" id="3.60.60.20">
    <property type="match status" value="1"/>
</dbReference>
<dbReference type="Gene3D" id="2.10.70.60">
    <property type="entry name" value="Phospholipase B-like, domain 1"/>
    <property type="match status" value="1"/>
</dbReference>
<dbReference type="Gene3D" id="1.10.439.20">
    <property type="entry name" value="Phospholipase B-like, domain 2"/>
    <property type="match status" value="1"/>
</dbReference>
<dbReference type="InterPro" id="IPR007000">
    <property type="entry name" value="PLipase_B-like"/>
</dbReference>
<dbReference type="InterPro" id="IPR043040">
    <property type="entry name" value="PLipase_B-like_dom1"/>
</dbReference>
<dbReference type="InterPro" id="IPR043041">
    <property type="entry name" value="PLipase_B-like_dom2"/>
</dbReference>
<dbReference type="InterPro" id="IPR043042">
    <property type="entry name" value="PLipase_B-like_dom3"/>
</dbReference>
<dbReference type="PANTHER" id="PTHR12370:SF3">
    <property type="entry name" value="PHOSPHOLIPASE B-LIKE 2-RELATED"/>
    <property type="match status" value="1"/>
</dbReference>
<dbReference type="PANTHER" id="PTHR12370">
    <property type="entry name" value="PHOSPHOLIPASE B-RELATED"/>
    <property type="match status" value="1"/>
</dbReference>
<dbReference type="Pfam" id="PF04916">
    <property type="entry name" value="Phospholip_B"/>
    <property type="match status" value="1"/>
</dbReference>
<name>PLBL2_RAT</name>
<keyword id="KW-0903">Direct protein sequencing</keyword>
<keyword id="KW-1015">Disulfide bond</keyword>
<keyword id="KW-0325">Glycoprotein</keyword>
<keyword id="KW-0378">Hydrolase</keyword>
<keyword id="KW-0442">Lipid degradation</keyword>
<keyword id="KW-0443">Lipid metabolism</keyword>
<keyword id="KW-0458">Lysosome</keyword>
<keyword id="KW-1185">Reference proteome</keyword>
<keyword id="KW-0732">Signal</keyword>
<accession>Q4QQW8</accession>
<accession>A0JN10</accession>
<accession>Q3MHS4</accession>
<accession>Q5RJZ9</accession>
<accession>Q8K1I4</accession>
<proteinExistence type="evidence at protein level"/>
<comment type="function">
    <text evidence="1">Putative phospholipase.</text>
</comment>
<comment type="subunit">
    <text evidence="1">Interacts with IGF2R.</text>
</comment>
<comment type="subcellular location">
    <subcellularLocation>
        <location evidence="3">Lysosome lumen</location>
    </subcellularLocation>
</comment>
<comment type="PTM">
    <text evidence="1">Glycosylated; contains mannose 6-phosphate sugars.</text>
</comment>
<comment type="similarity">
    <text evidence="4">Belongs to the phospholipase B-like family.</text>
</comment>
<comment type="sequence caution" evidence="4">
    <conflict type="erroneous initiation">
        <sequence resource="EMBL-CDS" id="AAM23313"/>
    </conflict>
</comment>
<organism>
    <name type="scientific">Rattus norvegicus</name>
    <name type="common">Rat</name>
    <dbReference type="NCBI Taxonomy" id="10116"/>
    <lineage>
        <taxon>Eukaryota</taxon>
        <taxon>Metazoa</taxon>
        <taxon>Chordata</taxon>
        <taxon>Craniata</taxon>
        <taxon>Vertebrata</taxon>
        <taxon>Euteleostomi</taxon>
        <taxon>Mammalia</taxon>
        <taxon>Eutheria</taxon>
        <taxon>Euarchontoglires</taxon>
        <taxon>Glires</taxon>
        <taxon>Rodentia</taxon>
        <taxon>Myomorpha</taxon>
        <taxon>Muroidea</taxon>
        <taxon>Muridae</taxon>
        <taxon>Murinae</taxon>
        <taxon>Rattus</taxon>
    </lineage>
</organism>
<feature type="signal peptide" evidence="2">
    <location>
        <begin position="1"/>
        <end position="35"/>
    </location>
</feature>
<feature type="chain" id="PRO_0000286112" description="Putative phospholipase B-like 2">
    <location>
        <begin position="36"/>
        <end position="585"/>
    </location>
</feature>
<feature type="glycosylation site" description="N-linked (GlcNAc...) asparagine" evidence="2">
    <location>
        <position position="84"/>
    </location>
</feature>
<feature type="glycosylation site" description="N-linked (GlcNAc...) asparagine" evidence="2">
    <location>
        <position position="102"/>
    </location>
</feature>
<feature type="glycosylation site" description="N-linked (GlcNAc...) asparagine" evidence="2">
    <location>
        <position position="106"/>
    </location>
</feature>
<feature type="glycosylation site" description="N-linked (GlcNAc...) asparagine" evidence="2">
    <location>
        <position position="227"/>
    </location>
</feature>
<feature type="glycosylation site" description="N-linked (GlcNAc...) asparagine" evidence="2">
    <location>
        <position position="432"/>
    </location>
</feature>
<feature type="glycosylation site" description="N-linked (GlcNAc...) asparagine" evidence="2">
    <location>
        <position position="511"/>
    </location>
</feature>
<feature type="disulfide bond" evidence="1">
    <location>
        <begin position="138"/>
        <end position="148"/>
    </location>
</feature>
<feature type="disulfide bond" evidence="1">
    <location>
        <begin position="488"/>
        <end position="491"/>
    </location>
</feature>
<feature type="sequence conflict" description="In Ref. 3; AAM23313." evidence="4" ref="3">
    <original>I</original>
    <variation>V</variation>
    <location>
        <position position="322"/>
    </location>
</feature>
<feature type="sequence conflict" description="In Ref. 3; AAM23313." evidence="4" ref="3">
    <original>A</original>
    <variation>P</variation>
    <location>
        <position position="433"/>
    </location>
</feature>
<feature type="sequence conflict" description="In Ref. 3; AAM23313." evidence="4" ref="3">
    <original>L</original>
    <variation>P</variation>
    <location>
        <position position="485"/>
    </location>
</feature>
<feature type="sequence conflict" description="In Ref. 3; AAM23313." evidence="4" ref="3">
    <original>G</original>
    <variation>S</variation>
    <location>
        <position position="570"/>
    </location>
</feature>
<protein>
    <recommendedName>
        <fullName>Putative phospholipase B-like 2</fullName>
        <ecNumber>3.1.1.-</ecNumber>
    </recommendedName>
    <alternativeName>
        <fullName>LAMA-like protein 2</fullName>
    </alternativeName>
    <alternativeName>
        <fullName>Lamina ancestor homolog 2</fullName>
    </alternativeName>
    <alternativeName>
        <fullName>Phospholipase B domain-containing protein 2</fullName>
    </alternativeName>
</protein>
<reference key="1">
    <citation type="journal article" date="2004" name="Nature">
        <title>Genome sequence of the Brown Norway rat yields insights into mammalian evolution.</title>
        <authorList>
            <person name="Gibbs R.A."/>
            <person name="Weinstock G.M."/>
            <person name="Metzker M.L."/>
            <person name="Muzny D.M."/>
            <person name="Sodergren E.J."/>
            <person name="Scherer S."/>
            <person name="Scott G."/>
            <person name="Steffen D."/>
            <person name="Worley K.C."/>
            <person name="Burch P.E."/>
            <person name="Okwuonu G."/>
            <person name="Hines S."/>
            <person name="Lewis L."/>
            <person name="Deramo C."/>
            <person name="Delgado O."/>
            <person name="Dugan-Rocha S."/>
            <person name="Miner G."/>
            <person name="Morgan M."/>
            <person name="Hawes A."/>
            <person name="Gill R."/>
            <person name="Holt R.A."/>
            <person name="Adams M.D."/>
            <person name="Amanatides P.G."/>
            <person name="Baden-Tillson H."/>
            <person name="Barnstead M."/>
            <person name="Chin S."/>
            <person name="Evans C.A."/>
            <person name="Ferriera S."/>
            <person name="Fosler C."/>
            <person name="Glodek A."/>
            <person name="Gu Z."/>
            <person name="Jennings D."/>
            <person name="Kraft C.L."/>
            <person name="Nguyen T."/>
            <person name="Pfannkoch C.M."/>
            <person name="Sitter C."/>
            <person name="Sutton G.G."/>
            <person name="Venter J.C."/>
            <person name="Woodage T."/>
            <person name="Smith D."/>
            <person name="Lee H.-M."/>
            <person name="Gustafson E."/>
            <person name="Cahill P."/>
            <person name="Kana A."/>
            <person name="Doucette-Stamm L."/>
            <person name="Weinstock K."/>
            <person name="Fechtel K."/>
            <person name="Weiss R.B."/>
            <person name="Dunn D.M."/>
            <person name="Green E.D."/>
            <person name="Blakesley R.W."/>
            <person name="Bouffard G.G."/>
            <person name="De Jong P.J."/>
            <person name="Osoegawa K."/>
            <person name="Zhu B."/>
            <person name="Marra M."/>
            <person name="Schein J."/>
            <person name="Bosdet I."/>
            <person name="Fjell C."/>
            <person name="Jones S."/>
            <person name="Krzywinski M."/>
            <person name="Mathewson C."/>
            <person name="Siddiqui A."/>
            <person name="Wye N."/>
            <person name="McPherson J."/>
            <person name="Zhao S."/>
            <person name="Fraser C.M."/>
            <person name="Shetty J."/>
            <person name="Shatsman S."/>
            <person name="Geer K."/>
            <person name="Chen Y."/>
            <person name="Abramzon S."/>
            <person name="Nierman W.C."/>
            <person name="Havlak P.H."/>
            <person name="Chen R."/>
            <person name="Durbin K.J."/>
            <person name="Egan A."/>
            <person name="Ren Y."/>
            <person name="Song X.-Z."/>
            <person name="Li B."/>
            <person name="Liu Y."/>
            <person name="Qin X."/>
            <person name="Cawley S."/>
            <person name="Cooney A.J."/>
            <person name="D'Souza L.M."/>
            <person name="Martin K."/>
            <person name="Wu J.Q."/>
            <person name="Gonzalez-Garay M.L."/>
            <person name="Jackson A.R."/>
            <person name="Kalafus K.J."/>
            <person name="McLeod M.P."/>
            <person name="Milosavljevic A."/>
            <person name="Virk D."/>
            <person name="Volkov A."/>
            <person name="Wheeler D.A."/>
            <person name="Zhang Z."/>
            <person name="Bailey J.A."/>
            <person name="Eichler E.E."/>
            <person name="Tuzun E."/>
            <person name="Birney E."/>
            <person name="Mongin E."/>
            <person name="Ureta-Vidal A."/>
            <person name="Woodwark C."/>
            <person name="Zdobnov E."/>
            <person name="Bork P."/>
            <person name="Suyama M."/>
            <person name="Torrents D."/>
            <person name="Alexandersson M."/>
            <person name="Trask B.J."/>
            <person name="Young J.M."/>
            <person name="Huang H."/>
            <person name="Wang H."/>
            <person name="Xing H."/>
            <person name="Daniels S."/>
            <person name="Gietzen D."/>
            <person name="Schmidt J."/>
            <person name="Stevens K."/>
            <person name="Vitt U."/>
            <person name="Wingrove J."/>
            <person name="Camara F."/>
            <person name="Mar Alba M."/>
            <person name="Abril J.F."/>
            <person name="Guigo R."/>
            <person name="Smit A."/>
            <person name="Dubchak I."/>
            <person name="Rubin E.M."/>
            <person name="Couronne O."/>
            <person name="Poliakov A."/>
            <person name="Huebner N."/>
            <person name="Ganten D."/>
            <person name="Goesele C."/>
            <person name="Hummel O."/>
            <person name="Kreitler T."/>
            <person name="Lee Y.-A."/>
            <person name="Monti J."/>
            <person name="Schulz H."/>
            <person name="Zimdahl H."/>
            <person name="Himmelbauer H."/>
            <person name="Lehrach H."/>
            <person name="Jacob H.J."/>
            <person name="Bromberg S."/>
            <person name="Gullings-Handley J."/>
            <person name="Jensen-Seaman M.I."/>
            <person name="Kwitek A.E."/>
            <person name="Lazar J."/>
            <person name="Pasko D."/>
            <person name="Tonellato P.J."/>
            <person name="Twigger S."/>
            <person name="Ponting C.P."/>
            <person name="Duarte J.M."/>
            <person name="Rice S."/>
            <person name="Goodstadt L."/>
            <person name="Beatson S.A."/>
            <person name="Emes R.D."/>
            <person name="Winter E.E."/>
            <person name="Webber C."/>
            <person name="Brandt P."/>
            <person name="Nyakatura G."/>
            <person name="Adetobi M."/>
            <person name="Chiaromonte F."/>
            <person name="Elnitski L."/>
            <person name="Eswara P."/>
            <person name="Hardison R.C."/>
            <person name="Hou M."/>
            <person name="Kolbe D."/>
            <person name="Makova K."/>
            <person name="Miller W."/>
            <person name="Nekrutenko A."/>
            <person name="Riemer C."/>
            <person name="Schwartz S."/>
            <person name="Taylor J."/>
            <person name="Yang S."/>
            <person name="Zhang Y."/>
            <person name="Lindpaintner K."/>
            <person name="Andrews T.D."/>
            <person name="Caccamo M."/>
            <person name="Clamp M."/>
            <person name="Clarke L."/>
            <person name="Curwen V."/>
            <person name="Durbin R.M."/>
            <person name="Eyras E."/>
            <person name="Searle S.M."/>
            <person name="Cooper G.M."/>
            <person name="Batzoglou S."/>
            <person name="Brudno M."/>
            <person name="Sidow A."/>
            <person name="Stone E.A."/>
            <person name="Payseur B.A."/>
            <person name="Bourque G."/>
            <person name="Lopez-Otin C."/>
            <person name="Puente X.S."/>
            <person name="Chakrabarti K."/>
            <person name="Chatterji S."/>
            <person name="Dewey C."/>
            <person name="Pachter L."/>
            <person name="Bray N."/>
            <person name="Yap V.B."/>
            <person name="Caspi A."/>
            <person name="Tesler G."/>
            <person name="Pevzner P.A."/>
            <person name="Haussler D."/>
            <person name="Roskin K.M."/>
            <person name="Baertsch R."/>
            <person name="Clawson H."/>
            <person name="Furey T.S."/>
            <person name="Hinrichs A.S."/>
            <person name="Karolchik D."/>
            <person name="Kent W.J."/>
            <person name="Rosenbloom K.R."/>
            <person name="Trumbower H."/>
            <person name="Weirauch M."/>
            <person name="Cooper D.N."/>
            <person name="Stenson P.D."/>
            <person name="Ma B."/>
            <person name="Brent M."/>
            <person name="Arumugam M."/>
            <person name="Shteynberg D."/>
            <person name="Copley R.R."/>
            <person name="Taylor M.S."/>
            <person name="Riethman H."/>
            <person name="Mudunuri U."/>
            <person name="Peterson J."/>
            <person name="Guyer M."/>
            <person name="Felsenfeld A."/>
            <person name="Old S."/>
            <person name="Mockrin S."/>
            <person name="Collins F.S."/>
        </authorList>
    </citation>
    <scope>NUCLEOTIDE SEQUENCE [LARGE SCALE GENOMIC DNA]</scope>
    <source>
        <strain>Brown Norway</strain>
    </source>
</reference>
<reference key="2">
    <citation type="journal article" date="2004" name="Genome Res.">
        <title>The status, quality, and expansion of the NIH full-length cDNA project: the Mammalian Gene Collection (MGC).</title>
        <authorList>
            <consortium name="The MGC Project Team"/>
        </authorList>
    </citation>
    <scope>NUCLEOTIDE SEQUENCE [LARGE SCALE MRNA] OF 229-585</scope>
    <source>
        <tissue>Brain</tissue>
        <tissue>Liver</tissue>
        <tissue>Ovary</tissue>
        <tissue>Thymus</tissue>
    </source>
</reference>
<reference key="3">
    <citation type="submission" date="2002-04" db="EMBL/GenBank/DDBJ databases">
        <title>Expression profile of cardiovascular complications in type 2 diabetes.</title>
        <authorList>
            <person name="Zhang F.L."/>
            <person name="Ye C.Z."/>
            <person name="Xie C."/>
            <person name="Li G."/>
            <person name="Luo M."/>
        </authorList>
    </citation>
    <scope>NUCLEOTIDE SEQUENCE [MRNA] OF 320-585</scope>
    <source>
        <strain>Sprague-Dawley</strain>
    </source>
</reference>
<reference key="4">
    <citation type="submission" date="2007-09" db="UniProtKB">
        <authorList>
            <person name="Lubec G."/>
            <person name="Kang S.U."/>
            <person name="Lubec S."/>
        </authorList>
    </citation>
    <scope>PROTEIN SEQUENCE OF 351-363</scope>
    <scope>IDENTIFICATION BY MASS SPECTROMETRY</scope>
    <source>
        <strain>Sprague-Dawley</strain>
        <tissue>Brain</tissue>
    </source>
</reference>
<reference key="5">
    <citation type="journal article" date="2007" name="Biochem. J.">
        <title>Biochemical characterization and lysosomal localization of the mannose-6-phosphate protein p76 (hypothetical protein LOC196463).</title>
        <authorList>
            <person name="Jensen A.G."/>
            <person name="Chemali M."/>
            <person name="Chapel A."/>
            <person name="Kieffer-Jaquinod S."/>
            <person name="Jadot M."/>
            <person name="Garin J."/>
            <person name="Journet A."/>
        </authorList>
    </citation>
    <scope>SUBCELLULAR LOCATION</scope>
</reference>
<evidence type="ECO:0000250" key="1"/>
<evidence type="ECO:0000255" key="2"/>
<evidence type="ECO:0000269" key="3">
    <source>
    </source>
</evidence>
<evidence type="ECO:0000305" key="4"/>
<sequence length="585" mass="65456">MAAPMDRTHGGRAARALRRALALASLAGLLLSGLAGALPTLGPGWRRQNPEPPASRTRSLLLDAASGQLRLEYGFHPDAVAWANLTNAIRETGWAYLDLGTNGSYNDSLQAYAAGVVEASVSEELIYMHWMNTVVNYCGPFEYEVGYCEKLKSFLEANLEWMQREMELSPDSPYWHQVRLTLLQLKGLEDSYEGRLTFPTGRFNIKPLGFLLLQISGDLEDLEPALNKTNTKPSVGSGSCSALIKLLPGSHDLLVAHNTWNSYQNMLRIIKKYRLQFREGPQEEYPLIAGNNLIFSSYPGTIFSGDDFYILGSGLVTLETTIGNKNPALWKYVQPQGCVLEWIRNIVANRLALDGATWADVFRRFNSGTYNNQWMIVDYKAFIPNGPSPGSRVLTILEQIPGMVVVADKTAELYKTTYWASYNIPYFESVFNASGLQALVAQYGDWFSYTRNPRAKIFQRDQSLVEDVDTMVRLMRYNDFLHDPLSLCEACSPKPNAENAISARSDLNPANGSYPFQALRQRAHGGIDVKVTSVALAKYMSMLAASGPTWDQLPPFQWSKSPFHNMLHMGQPDLWMFSPVKVPWD</sequence>
<gene>
    <name type="primary">Plbd2</name>
    <name type="ORF">RDCR-0918-3</name>
</gene>